<organism>
    <name type="scientific">Rickettsia bellii (strain RML369-C)</name>
    <dbReference type="NCBI Taxonomy" id="336407"/>
    <lineage>
        <taxon>Bacteria</taxon>
        <taxon>Pseudomonadati</taxon>
        <taxon>Pseudomonadota</taxon>
        <taxon>Alphaproteobacteria</taxon>
        <taxon>Rickettsiales</taxon>
        <taxon>Rickettsiaceae</taxon>
        <taxon>Rickettsieae</taxon>
        <taxon>Rickettsia</taxon>
        <taxon>belli group</taxon>
    </lineage>
</organism>
<protein>
    <recommendedName>
        <fullName>Signal peptidase I</fullName>
        <shortName>SPase I</shortName>
        <ecNumber>3.4.21.89</ecNumber>
    </recommendedName>
    <alternativeName>
        <fullName>Leader peptidase I</fullName>
    </alternativeName>
</protein>
<sequence>MTMKKLTSTTTTLWDNKLFINNLKNFMQTNTESNNNKTTAQEWKSFILVVVIALMIRILIIESFVVPTGSMKATILENDRIFGTKYSYGYSNYSLSFFDFIHLFKGRIFARTPERGDIIIFRPPHEMNTRYIKRLIGLPGDKVQLIDDVIYINDEKIERVESGIYVSEEGRKYLKFKETLPNGKTYFSYKLAPVLGIMFNDKYGNTDAFYVPEGEYFFLGDNRDQSNDSRIDLGFVPFENFIAKAQFIWFSTKITWWDSDIGVINLILKLKPWAESIRFNRIFRNLYSIED</sequence>
<comment type="catalytic activity">
    <reaction>
        <text>Cleavage of hydrophobic, N-terminal signal or leader sequences from secreted and periplasmic proteins.</text>
        <dbReference type="EC" id="3.4.21.89"/>
    </reaction>
</comment>
<comment type="subcellular location">
    <subcellularLocation>
        <location evidence="3">Cell inner membrane</location>
        <topology evidence="3">Single-pass type II membrane protein</topology>
    </subcellularLocation>
</comment>
<comment type="similarity">
    <text evidence="3">Belongs to the peptidase S26 family.</text>
</comment>
<name>LEP_RICBR</name>
<keyword id="KW-0997">Cell inner membrane</keyword>
<keyword id="KW-1003">Cell membrane</keyword>
<keyword id="KW-0378">Hydrolase</keyword>
<keyword id="KW-0472">Membrane</keyword>
<keyword id="KW-0812">Transmembrane</keyword>
<keyword id="KW-1133">Transmembrane helix</keyword>
<gene>
    <name type="primary">lepB</name>
    <name type="ordered locus">RBE_1182</name>
</gene>
<proteinExistence type="inferred from homology"/>
<feature type="chain" id="PRO_0000316273" description="Signal peptidase I">
    <location>
        <begin position="1"/>
        <end position="291"/>
    </location>
</feature>
<feature type="topological domain" description="Cytoplasmic" evidence="2">
    <location>
        <begin position="1"/>
        <end position="45"/>
    </location>
</feature>
<feature type="transmembrane region" description="Helical" evidence="2">
    <location>
        <begin position="46"/>
        <end position="66"/>
    </location>
</feature>
<feature type="topological domain" description="Periplasmic" evidence="2">
    <location>
        <begin position="67"/>
        <end position="291"/>
    </location>
</feature>
<feature type="active site" evidence="1">
    <location>
        <position position="70"/>
    </location>
</feature>
<feature type="active site" evidence="1">
    <location>
        <position position="133"/>
    </location>
</feature>
<dbReference type="EC" id="3.4.21.89"/>
<dbReference type="EMBL" id="CP000087">
    <property type="protein sequence ID" value="ABE05263.1"/>
    <property type="molecule type" value="Genomic_DNA"/>
</dbReference>
<dbReference type="SMR" id="Q1RHA1"/>
<dbReference type="MEROPS" id="S26.001"/>
<dbReference type="KEGG" id="rbe:RBE_1182"/>
<dbReference type="eggNOG" id="COG0681">
    <property type="taxonomic scope" value="Bacteria"/>
</dbReference>
<dbReference type="HOGENOM" id="CLU_028723_1_2_5"/>
<dbReference type="Proteomes" id="UP000001951">
    <property type="component" value="Chromosome"/>
</dbReference>
<dbReference type="GO" id="GO:0005886">
    <property type="term" value="C:plasma membrane"/>
    <property type="evidence" value="ECO:0007669"/>
    <property type="project" value="UniProtKB-SubCell"/>
</dbReference>
<dbReference type="GO" id="GO:0004252">
    <property type="term" value="F:serine-type endopeptidase activity"/>
    <property type="evidence" value="ECO:0007669"/>
    <property type="project" value="UniProtKB-EC"/>
</dbReference>
<dbReference type="GO" id="GO:0006465">
    <property type="term" value="P:signal peptide processing"/>
    <property type="evidence" value="ECO:0007669"/>
    <property type="project" value="InterPro"/>
</dbReference>
<dbReference type="CDD" id="cd06530">
    <property type="entry name" value="S26_SPase_I"/>
    <property type="match status" value="1"/>
</dbReference>
<dbReference type="Gene3D" id="2.10.109.10">
    <property type="entry name" value="Umud Fragment, subunit A"/>
    <property type="match status" value="1"/>
</dbReference>
<dbReference type="InterPro" id="IPR036286">
    <property type="entry name" value="LexA/Signal_pep-like_sf"/>
</dbReference>
<dbReference type="InterPro" id="IPR000223">
    <property type="entry name" value="Pept_S26A_signal_pept_1"/>
</dbReference>
<dbReference type="InterPro" id="IPR019758">
    <property type="entry name" value="Pept_S26A_signal_pept_1_CS"/>
</dbReference>
<dbReference type="InterPro" id="IPR019757">
    <property type="entry name" value="Pept_S26A_signal_pept_1_Lys-AS"/>
</dbReference>
<dbReference type="InterPro" id="IPR019533">
    <property type="entry name" value="Peptidase_S26"/>
</dbReference>
<dbReference type="NCBIfam" id="TIGR02227">
    <property type="entry name" value="sigpep_I_bact"/>
    <property type="match status" value="1"/>
</dbReference>
<dbReference type="PANTHER" id="PTHR43390:SF1">
    <property type="entry name" value="CHLOROPLAST PROCESSING PEPTIDASE"/>
    <property type="match status" value="1"/>
</dbReference>
<dbReference type="PANTHER" id="PTHR43390">
    <property type="entry name" value="SIGNAL PEPTIDASE I"/>
    <property type="match status" value="1"/>
</dbReference>
<dbReference type="Pfam" id="PF10502">
    <property type="entry name" value="Peptidase_S26"/>
    <property type="match status" value="1"/>
</dbReference>
<dbReference type="PRINTS" id="PR00727">
    <property type="entry name" value="LEADERPTASE"/>
</dbReference>
<dbReference type="SUPFAM" id="SSF51306">
    <property type="entry name" value="LexA/Signal peptidase"/>
    <property type="match status" value="1"/>
</dbReference>
<dbReference type="PROSITE" id="PS00760">
    <property type="entry name" value="SPASE_I_2"/>
    <property type="match status" value="1"/>
</dbReference>
<dbReference type="PROSITE" id="PS00761">
    <property type="entry name" value="SPASE_I_3"/>
    <property type="match status" value="1"/>
</dbReference>
<accession>Q1RHA1</accession>
<reference key="1">
    <citation type="journal article" date="2006" name="PLoS Genet.">
        <title>Genome sequence of Rickettsia bellii illuminates the role of amoebae in gene exchanges between intracellular pathogens.</title>
        <authorList>
            <person name="Ogata H."/>
            <person name="La Scola B."/>
            <person name="Audic S."/>
            <person name="Renesto P."/>
            <person name="Blanc G."/>
            <person name="Robert C."/>
            <person name="Fournier P.-E."/>
            <person name="Claverie J.-M."/>
            <person name="Raoult D."/>
        </authorList>
    </citation>
    <scope>NUCLEOTIDE SEQUENCE [LARGE SCALE GENOMIC DNA]</scope>
    <source>
        <strain>RML369-C</strain>
    </source>
</reference>
<evidence type="ECO:0000250" key="1"/>
<evidence type="ECO:0000255" key="2"/>
<evidence type="ECO:0000305" key="3"/>